<name>HBB_AQUCT</name>
<protein>
    <recommendedName>
        <fullName>Hemoglobin subunit beta</fullName>
    </recommendedName>
    <alternativeName>
        <fullName>Beta-globin</fullName>
    </alternativeName>
    <alternativeName>
        <fullName>Hemoglobin beta chain</fullName>
    </alternativeName>
</protein>
<evidence type="ECO:0000255" key="1">
    <source>
        <dbReference type="PROSITE-ProRule" id="PRU00238"/>
    </source>
</evidence>
<reference key="1">
    <citation type="journal article" date="1986" name="J. Biol. Chem.">
        <title>The hemoglobins of the bullfrog Rana catesbeiana. The structure of the beta chain of component C and the role of the alpha chain in the formation of intermolecular disulfide bonds.</title>
        <authorList>
            <person name="Tam L.T."/>
            <person name="Gray G.P."/>
            <person name="Riggs A.F."/>
        </authorList>
    </citation>
    <scope>PROTEIN SEQUENCE</scope>
</reference>
<dbReference type="PIR" id="A02455">
    <property type="entry name" value="HBFGC"/>
</dbReference>
<dbReference type="GO" id="GO:0072562">
    <property type="term" value="C:blood microparticle"/>
    <property type="evidence" value="ECO:0007669"/>
    <property type="project" value="TreeGrafter"/>
</dbReference>
<dbReference type="GO" id="GO:0031838">
    <property type="term" value="C:haptoglobin-hemoglobin complex"/>
    <property type="evidence" value="ECO:0007669"/>
    <property type="project" value="TreeGrafter"/>
</dbReference>
<dbReference type="GO" id="GO:0005833">
    <property type="term" value="C:hemoglobin complex"/>
    <property type="evidence" value="ECO:0007669"/>
    <property type="project" value="InterPro"/>
</dbReference>
<dbReference type="GO" id="GO:0031720">
    <property type="term" value="F:haptoglobin binding"/>
    <property type="evidence" value="ECO:0007669"/>
    <property type="project" value="TreeGrafter"/>
</dbReference>
<dbReference type="GO" id="GO:0020037">
    <property type="term" value="F:heme binding"/>
    <property type="evidence" value="ECO:0007669"/>
    <property type="project" value="InterPro"/>
</dbReference>
<dbReference type="GO" id="GO:0046872">
    <property type="term" value="F:metal ion binding"/>
    <property type="evidence" value="ECO:0007669"/>
    <property type="project" value="UniProtKB-KW"/>
</dbReference>
<dbReference type="GO" id="GO:0043177">
    <property type="term" value="F:organic acid binding"/>
    <property type="evidence" value="ECO:0007669"/>
    <property type="project" value="TreeGrafter"/>
</dbReference>
<dbReference type="GO" id="GO:0019825">
    <property type="term" value="F:oxygen binding"/>
    <property type="evidence" value="ECO:0007669"/>
    <property type="project" value="InterPro"/>
</dbReference>
<dbReference type="GO" id="GO:0005344">
    <property type="term" value="F:oxygen carrier activity"/>
    <property type="evidence" value="ECO:0007669"/>
    <property type="project" value="UniProtKB-KW"/>
</dbReference>
<dbReference type="GO" id="GO:0004601">
    <property type="term" value="F:peroxidase activity"/>
    <property type="evidence" value="ECO:0007669"/>
    <property type="project" value="TreeGrafter"/>
</dbReference>
<dbReference type="GO" id="GO:0042744">
    <property type="term" value="P:hydrogen peroxide catabolic process"/>
    <property type="evidence" value="ECO:0007669"/>
    <property type="project" value="TreeGrafter"/>
</dbReference>
<dbReference type="CDD" id="cd08925">
    <property type="entry name" value="Hb-beta-like"/>
    <property type="match status" value="1"/>
</dbReference>
<dbReference type="Gene3D" id="1.10.490.10">
    <property type="entry name" value="Globins"/>
    <property type="match status" value="1"/>
</dbReference>
<dbReference type="InterPro" id="IPR000971">
    <property type="entry name" value="Globin"/>
</dbReference>
<dbReference type="InterPro" id="IPR009050">
    <property type="entry name" value="Globin-like_sf"/>
</dbReference>
<dbReference type="InterPro" id="IPR012292">
    <property type="entry name" value="Globin/Proto"/>
</dbReference>
<dbReference type="InterPro" id="IPR002337">
    <property type="entry name" value="Hemoglobin_b"/>
</dbReference>
<dbReference type="InterPro" id="IPR050056">
    <property type="entry name" value="Hemoglobin_oxygen_transport"/>
</dbReference>
<dbReference type="PANTHER" id="PTHR11442">
    <property type="entry name" value="HEMOGLOBIN FAMILY MEMBER"/>
    <property type="match status" value="1"/>
</dbReference>
<dbReference type="PANTHER" id="PTHR11442:SF100">
    <property type="entry name" value="HEMOGLOBIN SUBUNIT BETA-1"/>
    <property type="match status" value="1"/>
</dbReference>
<dbReference type="Pfam" id="PF00042">
    <property type="entry name" value="Globin"/>
    <property type="match status" value="1"/>
</dbReference>
<dbReference type="PRINTS" id="PR00814">
    <property type="entry name" value="BETAHAEM"/>
</dbReference>
<dbReference type="SUPFAM" id="SSF46458">
    <property type="entry name" value="Globin-like"/>
    <property type="match status" value="1"/>
</dbReference>
<dbReference type="PROSITE" id="PS01033">
    <property type="entry name" value="GLOBIN"/>
    <property type="match status" value="1"/>
</dbReference>
<organism>
    <name type="scientific">Aquarana catesbeiana</name>
    <name type="common">American bullfrog</name>
    <name type="synonym">Rana catesbeiana</name>
    <dbReference type="NCBI Taxonomy" id="8400"/>
    <lineage>
        <taxon>Eukaryota</taxon>
        <taxon>Metazoa</taxon>
        <taxon>Chordata</taxon>
        <taxon>Craniata</taxon>
        <taxon>Vertebrata</taxon>
        <taxon>Euteleostomi</taxon>
        <taxon>Amphibia</taxon>
        <taxon>Batrachia</taxon>
        <taxon>Anura</taxon>
        <taxon>Neobatrachia</taxon>
        <taxon>Ranoidea</taxon>
        <taxon>Ranidae</taxon>
        <taxon>Aquarana</taxon>
    </lineage>
</organism>
<keyword id="KW-0903">Direct protein sequencing</keyword>
<keyword id="KW-0349">Heme</keyword>
<keyword id="KW-0408">Iron</keyword>
<keyword id="KW-0479">Metal-binding</keyword>
<keyword id="KW-0561">Oxygen transport</keyword>
<keyword id="KW-0813">Transport</keyword>
<gene>
    <name type="primary">HBB</name>
</gene>
<feature type="chain" id="PRO_0000053086" description="Hemoglobin subunit beta">
    <location>
        <begin position="1"/>
        <end position="140"/>
    </location>
</feature>
<feature type="domain" description="Globin" evidence="1">
    <location>
        <begin position="1"/>
        <end position="140"/>
    </location>
</feature>
<feature type="binding site" description="distal binding residue">
    <location>
        <position position="57"/>
    </location>
    <ligand>
        <name>heme b</name>
        <dbReference type="ChEBI" id="CHEBI:60344"/>
    </ligand>
    <ligandPart>
        <name>Fe</name>
        <dbReference type="ChEBI" id="CHEBI:18248"/>
    </ligandPart>
</feature>
<feature type="binding site" description="proximal binding residue">
    <location>
        <position position="86"/>
    </location>
    <ligand>
        <name>heme b</name>
        <dbReference type="ChEBI" id="CHEBI:60344"/>
    </ligand>
    <ligandPart>
        <name>Fe</name>
        <dbReference type="ChEBI" id="CHEBI:18248"/>
    </ligandPart>
</feature>
<comment type="function">
    <text>The beta chain is a component of adult hemoglobins B. And C.</text>
</comment>
<comment type="subunit">
    <text>Heterotetramer of either two alpha-B chains or two alpha-C chains and two beta chains.</text>
</comment>
<comment type="miscellaneous">
    <text>Hemoglobin C tetramers polymerize by the formation of disulfide bonds. The deoxy tetramers of hemoglobin B and C associate to form molecules believed to be trimers (B+2C) of very low oxygen affinity.</text>
</comment>
<comment type="similarity">
    <text evidence="1">Belongs to the globin family.</text>
</comment>
<accession>P02135</accession>
<sequence length="140" mass="15425">GGSDVSAFLAKVDKRAVGGEALARLLIVYPWTQRYFSTFGNLGSADAISHNSKVLAHGQRVLDSIEEGLKHPZBLKAYYAKLSERHSGELHVDPANFYRLGNVLITVMARHFHEEFTPELQCALHSSFCAVGEALAKGYH</sequence>
<proteinExistence type="evidence at protein level"/>